<feature type="chain" id="PRO_0000070011" description="P2Y purinoceptor 2">
    <location>
        <begin position="1" status="less than"/>
        <end position="133" status="greater than"/>
    </location>
</feature>
<feature type="topological domain" description="Cytoplasmic" evidence="2">
    <location>
        <begin position="1" status="less than"/>
        <end position="26"/>
    </location>
</feature>
<feature type="transmembrane region" description="Helical; Name=4" evidence="2">
    <location>
        <begin position="27"/>
        <end position="47"/>
    </location>
</feature>
<feature type="topological domain" description="Extracellular" evidence="2">
    <location>
        <begin position="48"/>
        <end position="74"/>
    </location>
</feature>
<feature type="transmembrane region" description="Helical; Name=5" evidence="2">
    <location>
        <begin position="75"/>
        <end position="95"/>
    </location>
</feature>
<feature type="topological domain" description="Cytoplasmic" evidence="2">
    <location>
        <begin position="96"/>
        <end position="116"/>
    </location>
</feature>
<feature type="transmembrane region" description="Helical; Name=6" evidence="2">
    <location>
        <begin position="117"/>
        <end position="133" status="greater than"/>
    </location>
</feature>
<feature type="non-terminal residue">
    <location>
        <position position="1"/>
    </location>
</feature>
<feature type="non-terminal residue">
    <location>
        <position position="133"/>
    </location>
</feature>
<evidence type="ECO:0000250" key="1"/>
<evidence type="ECO:0000255" key="2"/>
<evidence type="ECO:0000255" key="3">
    <source>
        <dbReference type="PROSITE-ProRule" id="PRU00521"/>
    </source>
</evidence>
<keyword id="KW-1003">Cell membrane</keyword>
<keyword id="KW-0297">G-protein coupled receptor</keyword>
<keyword id="KW-0472">Membrane</keyword>
<keyword id="KW-0675">Receptor</keyword>
<keyword id="KW-1185">Reference proteome</keyword>
<keyword id="KW-0807">Transducer</keyword>
<keyword id="KW-0812">Transmembrane</keyword>
<keyword id="KW-1133">Transmembrane helix</keyword>
<comment type="function">
    <text evidence="1">Receptor for ATP and UTP coupled to G-proteins that activate a phosphatidylinositol-calcium second messenger system.</text>
</comment>
<comment type="subcellular location">
    <subcellularLocation>
        <location>Cell membrane</location>
        <topology>Multi-pass membrane protein</topology>
    </subcellularLocation>
</comment>
<comment type="similarity">
    <text evidence="3">Belongs to the G-protein coupled receptor 1 family.</text>
</comment>
<protein>
    <recommendedName>
        <fullName>P2Y purinoceptor 2</fullName>
        <shortName>P2Y2</shortName>
    </recommendedName>
</protein>
<organism>
    <name type="scientific">Bos taurus</name>
    <name type="common">Bovine</name>
    <dbReference type="NCBI Taxonomy" id="9913"/>
    <lineage>
        <taxon>Eukaryota</taxon>
        <taxon>Metazoa</taxon>
        <taxon>Chordata</taxon>
        <taxon>Craniata</taxon>
        <taxon>Vertebrata</taxon>
        <taxon>Euteleostomi</taxon>
        <taxon>Mammalia</taxon>
        <taxon>Eutheria</taxon>
        <taxon>Laurasiatheria</taxon>
        <taxon>Artiodactyla</taxon>
        <taxon>Ruminantia</taxon>
        <taxon>Pecora</taxon>
        <taxon>Bovidae</taxon>
        <taxon>Bovinae</taxon>
        <taxon>Bos</taxon>
    </lineage>
</organism>
<dbReference type="EMBL" id="AF005153">
    <property type="protein sequence ID" value="AAB62543.1"/>
    <property type="molecule type" value="mRNA"/>
</dbReference>
<dbReference type="SMR" id="O18951"/>
<dbReference type="STRING" id="9913.ENSBTAP00000048441"/>
<dbReference type="PaxDb" id="9913-ENSBTAP00000048441"/>
<dbReference type="eggNOG" id="ENOG502QSTF">
    <property type="taxonomic scope" value="Eukaryota"/>
</dbReference>
<dbReference type="InParanoid" id="O18951"/>
<dbReference type="OrthoDB" id="10018446at2759"/>
<dbReference type="Proteomes" id="UP000009136">
    <property type="component" value="Unplaced"/>
</dbReference>
<dbReference type="GO" id="GO:0005886">
    <property type="term" value="C:plasma membrane"/>
    <property type="evidence" value="ECO:0000318"/>
    <property type="project" value="GO_Central"/>
</dbReference>
<dbReference type="GO" id="GO:0031686">
    <property type="term" value="F:A1 adenosine receptor binding"/>
    <property type="evidence" value="ECO:0000318"/>
    <property type="project" value="GO_Central"/>
</dbReference>
<dbReference type="GO" id="GO:0045028">
    <property type="term" value="F:G protein-coupled purinergic nucleotide receptor activity"/>
    <property type="evidence" value="ECO:0007669"/>
    <property type="project" value="InterPro"/>
</dbReference>
<dbReference type="GO" id="GO:0045030">
    <property type="term" value="F:G protein-coupled UTP receptor activity"/>
    <property type="evidence" value="ECO:0000318"/>
    <property type="project" value="GO_Central"/>
</dbReference>
<dbReference type="GO" id="GO:0097746">
    <property type="term" value="P:blood vessel diameter maintenance"/>
    <property type="evidence" value="ECO:0007669"/>
    <property type="project" value="InterPro"/>
</dbReference>
<dbReference type="GO" id="GO:0007186">
    <property type="term" value="P:G protein-coupled receptor signaling pathway"/>
    <property type="evidence" value="ECO:0000318"/>
    <property type="project" value="GO_Central"/>
</dbReference>
<dbReference type="GO" id="GO:0007200">
    <property type="term" value="P:phospholipase C-activating G protein-coupled receptor signaling pathway"/>
    <property type="evidence" value="ECO:0007669"/>
    <property type="project" value="InterPro"/>
</dbReference>
<dbReference type="GO" id="GO:0070257">
    <property type="term" value="P:positive regulation of mucus secretion"/>
    <property type="evidence" value="ECO:0007669"/>
    <property type="project" value="InterPro"/>
</dbReference>
<dbReference type="Gene3D" id="1.20.1070.10">
    <property type="entry name" value="Rhodopsin 7-helix transmembrane proteins"/>
    <property type="match status" value="1"/>
</dbReference>
<dbReference type="InterPro" id="IPR000276">
    <property type="entry name" value="GPCR_Rhodpsn"/>
</dbReference>
<dbReference type="InterPro" id="IPR017452">
    <property type="entry name" value="GPCR_Rhodpsn_7TM"/>
</dbReference>
<dbReference type="InterPro" id="IPR000356">
    <property type="entry name" value="P2Y2_rcpt"/>
</dbReference>
<dbReference type="PANTHER" id="PTHR24231:SF17">
    <property type="entry name" value="P2Y PURINOCEPTOR 2"/>
    <property type="match status" value="1"/>
</dbReference>
<dbReference type="PANTHER" id="PTHR24231">
    <property type="entry name" value="PURINOCEPTOR-RELATED G-PROTEIN COUPLED RECEPTOR"/>
    <property type="match status" value="1"/>
</dbReference>
<dbReference type="Pfam" id="PF00001">
    <property type="entry name" value="7tm_1"/>
    <property type="match status" value="1"/>
</dbReference>
<dbReference type="PRINTS" id="PR00237">
    <property type="entry name" value="GPCRRHODOPSN"/>
</dbReference>
<dbReference type="PRINTS" id="PR00594">
    <property type="entry name" value="P2Y2PRNOCPTR"/>
</dbReference>
<dbReference type="SUPFAM" id="SSF81321">
    <property type="entry name" value="Family A G protein-coupled receptor-like"/>
    <property type="match status" value="1"/>
</dbReference>
<dbReference type="PROSITE" id="PS50262">
    <property type="entry name" value="G_PROTEIN_RECEP_F1_2"/>
    <property type="match status" value="1"/>
</dbReference>
<sequence>ISVHRCLGVLRPLHSLRWGRARYARRVAFAVWVLVLYCQAPVLYFVTTSTRSSRIICHDTSARELFSHFVAYSSVMLSLLFAAPFAVILVCYVLMARRLLKPAYGTSGGLPRAKRKSVRTIAIVLTVFVLCFL</sequence>
<accession>O18951</accession>
<proteinExistence type="evidence at transcript level"/>
<gene>
    <name type="primary">P2RY2</name>
</gene>
<name>P2RY2_BOVIN</name>
<reference key="1">
    <citation type="submission" date="1997-05" db="EMBL/GenBank/DDBJ databases">
        <title>Identification of multiple P2 purinergic receptor subtypes in bovine aortic endothelial cells (BAECs).</title>
        <authorList>
            <person name="Chang A.S."/>
            <person name="Chang S.M."/>
            <person name="Schilling W.P."/>
        </authorList>
    </citation>
    <scope>NUCLEOTIDE SEQUENCE [MRNA]</scope>
</reference>